<reference key="1">
    <citation type="submission" date="2007-08" db="EMBL/GenBank/DDBJ databases">
        <title>Complete sequence of Roseiflexus castenholzii DSM 13941.</title>
        <authorList>
            <consortium name="US DOE Joint Genome Institute"/>
            <person name="Copeland A."/>
            <person name="Lucas S."/>
            <person name="Lapidus A."/>
            <person name="Barry K."/>
            <person name="Glavina del Rio T."/>
            <person name="Dalin E."/>
            <person name="Tice H."/>
            <person name="Pitluck S."/>
            <person name="Thompson L.S."/>
            <person name="Brettin T."/>
            <person name="Bruce D."/>
            <person name="Detter J.C."/>
            <person name="Han C."/>
            <person name="Tapia R."/>
            <person name="Schmutz J."/>
            <person name="Larimer F."/>
            <person name="Land M."/>
            <person name="Hauser L."/>
            <person name="Kyrpides N."/>
            <person name="Mikhailova N."/>
            <person name="Bryant D.A."/>
            <person name="Hanada S."/>
            <person name="Tsukatani Y."/>
            <person name="Richardson P."/>
        </authorList>
    </citation>
    <scope>NUCLEOTIDE SEQUENCE [LARGE SCALE GENOMIC DNA]</scope>
    <source>
        <strain>DSM 13941 / HLO8</strain>
    </source>
</reference>
<dbReference type="EC" id="4.2.1.59" evidence="1"/>
<dbReference type="EMBL" id="CP000804">
    <property type="protein sequence ID" value="ABU59016.1"/>
    <property type="molecule type" value="Genomic_DNA"/>
</dbReference>
<dbReference type="RefSeq" id="WP_012121440.1">
    <property type="nucleotide sequence ID" value="NC_009767.1"/>
</dbReference>
<dbReference type="SMR" id="A7NN83"/>
<dbReference type="STRING" id="383372.Rcas_2956"/>
<dbReference type="KEGG" id="rca:Rcas_2956"/>
<dbReference type="eggNOG" id="COG0764">
    <property type="taxonomic scope" value="Bacteria"/>
</dbReference>
<dbReference type="HOGENOM" id="CLU_078912_3_0_0"/>
<dbReference type="OrthoDB" id="9772788at2"/>
<dbReference type="Proteomes" id="UP000000263">
    <property type="component" value="Chromosome"/>
</dbReference>
<dbReference type="GO" id="GO:0005737">
    <property type="term" value="C:cytoplasm"/>
    <property type="evidence" value="ECO:0007669"/>
    <property type="project" value="UniProtKB-SubCell"/>
</dbReference>
<dbReference type="GO" id="GO:0016020">
    <property type="term" value="C:membrane"/>
    <property type="evidence" value="ECO:0007669"/>
    <property type="project" value="GOC"/>
</dbReference>
<dbReference type="GO" id="GO:0019171">
    <property type="term" value="F:(3R)-hydroxyacyl-[acyl-carrier-protein] dehydratase activity"/>
    <property type="evidence" value="ECO:0007669"/>
    <property type="project" value="UniProtKB-EC"/>
</dbReference>
<dbReference type="GO" id="GO:0006633">
    <property type="term" value="P:fatty acid biosynthetic process"/>
    <property type="evidence" value="ECO:0007669"/>
    <property type="project" value="UniProtKB-UniRule"/>
</dbReference>
<dbReference type="GO" id="GO:0009245">
    <property type="term" value="P:lipid A biosynthetic process"/>
    <property type="evidence" value="ECO:0007669"/>
    <property type="project" value="UniProtKB-UniRule"/>
</dbReference>
<dbReference type="CDD" id="cd01288">
    <property type="entry name" value="FabZ"/>
    <property type="match status" value="1"/>
</dbReference>
<dbReference type="FunFam" id="3.10.129.10:FF:000001">
    <property type="entry name" value="3-hydroxyacyl-[acyl-carrier-protein] dehydratase FabZ"/>
    <property type="match status" value="1"/>
</dbReference>
<dbReference type="Gene3D" id="3.10.129.10">
    <property type="entry name" value="Hotdog Thioesterase"/>
    <property type="match status" value="1"/>
</dbReference>
<dbReference type="HAMAP" id="MF_00406">
    <property type="entry name" value="FabZ"/>
    <property type="match status" value="1"/>
</dbReference>
<dbReference type="InterPro" id="IPR013114">
    <property type="entry name" value="FabA_FabZ"/>
</dbReference>
<dbReference type="InterPro" id="IPR010084">
    <property type="entry name" value="FabZ"/>
</dbReference>
<dbReference type="InterPro" id="IPR029069">
    <property type="entry name" value="HotDog_dom_sf"/>
</dbReference>
<dbReference type="NCBIfam" id="TIGR01750">
    <property type="entry name" value="fabZ"/>
    <property type="match status" value="1"/>
</dbReference>
<dbReference type="NCBIfam" id="NF000582">
    <property type="entry name" value="PRK00006.1"/>
    <property type="match status" value="1"/>
</dbReference>
<dbReference type="PANTHER" id="PTHR30272">
    <property type="entry name" value="3-HYDROXYACYL-[ACYL-CARRIER-PROTEIN] DEHYDRATASE"/>
    <property type="match status" value="1"/>
</dbReference>
<dbReference type="PANTHER" id="PTHR30272:SF1">
    <property type="entry name" value="3-HYDROXYACYL-[ACYL-CARRIER-PROTEIN] DEHYDRATASE"/>
    <property type="match status" value="1"/>
</dbReference>
<dbReference type="Pfam" id="PF07977">
    <property type="entry name" value="FabA"/>
    <property type="match status" value="1"/>
</dbReference>
<dbReference type="SUPFAM" id="SSF54637">
    <property type="entry name" value="Thioesterase/thiol ester dehydrase-isomerase"/>
    <property type="match status" value="1"/>
</dbReference>
<name>FABZ_ROSCS</name>
<accession>A7NN83</accession>
<protein>
    <recommendedName>
        <fullName evidence="1">3-hydroxyacyl-[acyl-carrier-protein] dehydratase FabZ</fullName>
        <ecNumber evidence="1">4.2.1.59</ecNumber>
    </recommendedName>
    <alternativeName>
        <fullName evidence="1">(3R)-hydroxymyristoyl-[acyl-carrier-protein] dehydratase</fullName>
        <shortName evidence="1">(3R)-hydroxymyristoyl-ACP dehydrase</shortName>
    </alternativeName>
    <alternativeName>
        <fullName evidence="1">Beta-hydroxyacyl-ACP dehydratase</fullName>
    </alternativeName>
</protein>
<sequence>MLNIQEIMAIIPHRYPFLLIDRILELEPGQRAVGEKLVTINEPFFQGHFPAHPIMPGVLIVEALAQTGAVAALSLPENRGKIAFFAGIDGVRFRKPVYPGDTLRLEVRFDKMRRGIGKGTGVATVDGQVVCEGELMFALHVER</sequence>
<feature type="chain" id="PRO_1000080445" description="3-hydroxyacyl-[acyl-carrier-protein] dehydratase FabZ">
    <location>
        <begin position="1"/>
        <end position="143"/>
    </location>
</feature>
<feature type="active site" evidence="1">
    <location>
        <position position="48"/>
    </location>
</feature>
<gene>
    <name evidence="1" type="primary">fabZ</name>
    <name type="ordered locus">Rcas_2956</name>
</gene>
<organism>
    <name type="scientific">Roseiflexus castenholzii (strain DSM 13941 / HLO8)</name>
    <dbReference type="NCBI Taxonomy" id="383372"/>
    <lineage>
        <taxon>Bacteria</taxon>
        <taxon>Bacillati</taxon>
        <taxon>Chloroflexota</taxon>
        <taxon>Chloroflexia</taxon>
        <taxon>Chloroflexales</taxon>
        <taxon>Roseiflexineae</taxon>
        <taxon>Roseiflexaceae</taxon>
        <taxon>Roseiflexus</taxon>
    </lineage>
</organism>
<keyword id="KW-0963">Cytoplasm</keyword>
<keyword id="KW-0441">Lipid A biosynthesis</keyword>
<keyword id="KW-0444">Lipid biosynthesis</keyword>
<keyword id="KW-0443">Lipid metabolism</keyword>
<keyword id="KW-0456">Lyase</keyword>
<keyword id="KW-1185">Reference proteome</keyword>
<comment type="function">
    <text evidence="1">Involved in unsaturated fatty acids biosynthesis. Catalyzes the dehydration of short chain beta-hydroxyacyl-ACPs and long chain saturated and unsaturated beta-hydroxyacyl-ACPs.</text>
</comment>
<comment type="catalytic activity">
    <reaction evidence="1">
        <text>a (3R)-hydroxyacyl-[ACP] = a (2E)-enoyl-[ACP] + H2O</text>
        <dbReference type="Rhea" id="RHEA:13097"/>
        <dbReference type="Rhea" id="RHEA-COMP:9925"/>
        <dbReference type="Rhea" id="RHEA-COMP:9945"/>
        <dbReference type="ChEBI" id="CHEBI:15377"/>
        <dbReference type="ChEBI" id="CHEBI:78784"/>
        <dbReference type="ChEBI" id="CHEBI:78827"/>
        <dbReference type="EC" id="4.2.1.59"/>
    </reaction>
</comment>
<comment type="subcellular location">
    <subcellularLocation>
        <location evidence="1">Cytoplasm</location>
    </subcellularLocation>
</comment>
<comment type="similarity">
    <text evidence="1">Belongs to the thioester dehydratase family. FabZ subfamily.</text>
</comment>
<evidence type="ECO:0000255" key="1">
    <source>
        <dbReference type="HAMAP-Rule" id="MF_00406"/>
    </source>
</evidence>
<proteinExistence type="inferred from homology"/>